<organism>
    <name type="scientific">Phaeosphaeria nodorum (strain SN15 / ATCC MYA-4574 / FGSC 10173)</name>
    <name type="common">Glume blotch fungus</name>
    <name type="synonym">Parastagonospora nodorum</name>
    <dbReference type="NCBI Taxonomy" id="321614"/>
    <lineage>
        <taxon>Eukaryota</taxon>
        <taxon>Fungi</taxon>
        <taxon>Dikarya</taxon>
        <taxon>Ascomycota</taxon>
        <taxon>Pezizomycotina</taxon>
        <taxon>Dothideomycetes</taxon>
        <taxon>Pleosporomycetidae</taxon>
        <taxon>Pleosporales</taxon>
        <taxon>Pleosporineae</taxon>
        <taxon>Phaeosphaeriaceae</taxon>
        <taxon>Parastagonospora</taxon>
    </lineage>
</organism>
<name>YME2_PHANO</name>
<feature type="transit peptide" description="Mitochondrion" evidence="2">
    <location>
        <begin position="1"/>
        <end status="unknown"/>
    </location>
</feature>
<feature type="chain" id="PRO_0000343128" description="Mitochondrial escape protein 2">
    <location>
        <begin status="unknown"/>
        <end position="823"/>
    </location>
</feature>
<feature type="topological domain" description="Mitochondrial matrix" evidence="2">
    <location>
        <begin status="unknown"/>
        <end position="281"/>
    </location>
</feature>
<feature type="transmembrane region" description="Helical" evidence="2">
    <location>
        <begin position="282"/>
        <end position="302"/>
    </location>
</feature>
<feature type="topological domain" description="Mitochondrial intermembrane" evidence="2">
    <location>
        <begin position="303"/>
        <end position="823"/>
    </location>
</feature>
<feature type="domain" description="RRM" evidence="3">
    <location>
        <begin position="174"/>
        <end position="266"/>
    </location>
</feature>
<reference key="1">
    <citation type="journal article" date="2007" name="Plant Cell">
        <title>Dothideomycete-plant interactions illuminated by genome sequencing and EST analysis of the wheat pathogen Stagonospora nodorum.</title>
        <authorList>
            <person name="Hane J.K."/>
            <person name="Lowe R.G.T."/>
            <person name="Solomon P.S."/>
            <person name="Tan K.-C."/>
            <person name="Schoch C.L."/>
            <person name="Spatafora J.W."/>
            <person name="Crous P.W."/>
            <person name="Kodira C.D."/>
            <person name="Birren B.W."/>
            <person name="Galagan J.E."/>
            <person name="Torriani S.F.F."/>
            <person name="McDonald B.A."/>
            <person name="Oliver R.P."/>
        </authorList>
    </citation>
    <scope>NUCLEOTIDE SEQUENCE [LARGE SCALE GENOMIC DNA]</scope>
    <source>
        <strain>SN15 / ATCC MYA-4574 / FGSC 10173</strain>
    </source>
</reference>
<dbReference type="EMBL" id="CH445326">
    <property type="protein sequence ID" value="EAT91127.2"/>
    <property type="molecule type" value="Genomic_DNA"/>
</dbReference>
<dbReference type="RefSeq" id="XP_001792116.1">
    <property type="nucleotide sequence ID" value="XM_001792064.1"/>
</dbReference>
<dbReference type="FunCoup" id="Q0V3D6">
    <property type="interactions" value="114"/>
</dbReference>
<dbReference type="EnsemblFungi" id="SNOT_01478">
    <property type="protein sequence ID" value="SNOT_01478"/>
    <property type="gene ID" value="SNOG_01478"/>
</dbReference>
<dbReference type="GeneID" id="5968961"/>
<dbReference type="KEGG" id="pno:SNOG_01478"/>
<dbReference type="VEuPathDB" id="FungiDB:JI435_014780"/>
<dbReference type="eggNOG" id="ENOG502QS0P">
    <property type="taxonomic scope" value="Eukaryota"/>
</dbReference>
<dbReference type="HOGENOM" id="CLU_007861_0_0_1"/>
<dbReference type="InParanoid" id="Q0V3D6"/>
<dbReference type="Proteomes" id="UP000001055">
    <property type="component" value="Unassembled WGS sequence"/>
</dbReference>
<dbReference type="GO" id="GO:0005743">
    <property type="term" value="C:mitochondrial inner membrane"/>
    <property type="evidence" value="ECO:0000318"/>
    <property type="project" value="GO_Central"/>
</dbReference>
<dbReference type="GO" id="GO:0003723">
    <property type="term" value="F:RNA binding"/>
    <property type="evidence" value="ECO:0007669"/>
    <property type="project" value="UniProtKB-KW"/>
</dbReference>
<dbReference type="GO" id="GO:0000002">
    <property type="term" value="P:mitochondrial genome maintenance"/>
    <property type="evidence" value="ECO:0000318"/>
    <property type="project" value="GO_Central"/>
</dbReference>
<dbReference type="GO" id="GO:0006397">
    <property type="term" value="P:mRNA processing"/>
    <property type="evidence" value="ECO:0007669"/>
    <property type="project" value="UniProtKB-KW"/>
</dbReference>
<dbReference type="CDD" id="cd12433">
    <property type="entry name" value="RRM_Yme2p_like"/>
    <property type="match status" value="1"/>
</dbReference>
<dbReference type="Gene3D" id="3.30.70.330">
    <property type="match status" value="1"/>
</dbReference>
<dbReference type="InterPro" id="IPR018850">
    <property type="entry name" value="Mt_escape_2_C"/>
</dbReference>
<dbReference type="InterPro" id="IPR012677">
    <property type="entry name" value="Nucleotide-bd_a/b_plait_sf"/>
</dbReference>
<dbReference type="InterPro" id="IPR035979">
    <property type="entry name" value="RBD_domain_sf"/>
</dbReference>
<dbReference type="InterPro" id="IPR000504">
    <property type="entry name" value="RRM_dom"/>
</dbReference>
<dbReference type="InterPro" id="IPR039627">
    <property type="entry name" value="Yme2_C"/>
</dbReference>
<dbReference type="InterPro" id="IPR034260">
    <property type="entry name" value="Yme2_RRM"/>
</dbReference>
<dbReference type="PANTHER" id="PTHR32198">
    <property type="entry name" value="MITOCHONDRIAL ESCAPE PROTEIN 2"/>
    <property type="match status" value="1"/>
</dbReference>
<dbReference type="PANTHER" id="PTHR32198:SF2">
    <property type="entry name" value="MITOCHONDRIAL ESCAPE PROTEIN 2"/>
    <property type="match status" value="1"/>
</dbReference>
<dbReference type="Pfam" id="PF10443">
    <property type="entry name" value="RNA12"/>
    <property type="match status" value="1"/>
</dbReference>
<dbReference type="Pfam" id="PF00076">
    <property type="entry name" value="RRM_1"/>
    <property type="match status" value="1"/>
</dbReference>
<dbReference type="SUPFAM" id="SSF54928">
    <property type="entry name" value="RNA-binding domain, RBD"/>
    <property type="match status" value="1"/>
</dbReference>
<dbReference type="PROSITE" id="PS50102">
    <property type="entry name" value="RRM"/>
    <property type="match status" value="1"/>
</dbReference>
<protein>
    <recommendedName>
        <fullName>Mitochondrial escape protein 2</fullName>
    </recommendedName>
</protein>
<keyword id="KW-0472">Membrane</keyword>
<keyword id="KW-0496">Mitochondrion</keyword>
<keyword id="KW-0999">Mitochondrion inner membrane</keyword>
<keyword id="KW-0507">mRNA processing</keyword>
<keyword id="KW-0694">RNA-binding</keyword>
<keyword id="KW-0809">Transit peptide</keyword>
<keyword id="KW-0812">Transmembrane</keyword>
<keyword id="KW-1133">Transmembrane helix</keyword>
<gene>
    <name type="primary">YME2</name>
    <name type="ORF">SNOG_01478</name>
</gene>
<comment type="function">
    <text evidence="1">Plays a role in maintaining the mitochondrial genome and in controlling the mtDNA escape. Involved in the regulation of mtDNA nucleotide structure and number. May have a dispensable role in early maturation of pre-rRNA (By similarity).</text>
</comment>
<comment type="subcellular location">
    <subcellularLocation>
        <location evidence="1">Mitochondrion inner membrane</location>
        <topology evidence="1">Single-pass membrane protein</topology>
    </subcellularLocation>
</comment>
<comment type="similarity">
    <text evidence="4">Belongs to the YME2 family.</text>
</comment>
<proteinExistence type="inferred from homology"/>
<accession>Q0V3D6</accession>
<evidence type="ECO:0000250" key="1"/>
<evidence type="ECO:0000255" key="2"/>
<evidence type="ECO:0000255" key="3">
    <source>
        <dbReference type="PROSITE-ProRule" id="PRU00176"/>
    </source>
</evidence>
<evidence type="ECO:0000305" key="4"/>
<sequence length="823" mass="92664">MRVEDHCSVFAWSSLQASRPWPAAGRYASLQAGEDKTGHISAGPNEGILFFNNVFPIQIRKIMGLPMPRILDRLISPAMSGTDPNTVIQRAKAKRNLPIESTEILPRVREGGAFVKFTHDGSTPTSEIEKTLQEYLRDEPVKPWWSPWKRMRAKVVKGRPWVEDMMRLPAPRLRVEFVPGEPGASVTEAVDLSQEQLFQFFRPYGKLSDIVMQESDSKVLPKFAYLDYSSIGKAIMAKNCMHGYLVSEAEGGGKKGTFLRLKYEQKIKPRYIRDWIINHPRIIIPIIAALIAGTVAIVFDPIRTFFVKAHITRTLHLEDNKWYKWIKGYASDIIRGHKRDEDDSYDAIWDDRKGNIEQIQTWLMETADTFIIVQGPRGSGKKELVVDQALQDNKLKLVIDCKPIQEARGDSPTISAAAAAVGYKPVFSWMNSISGMIDMAAQGATGMKTGFSETQETQLNKIWNTTTTALKQIALERRHKDDRDANLADDDWLEAHPEHRPVVVIDNFLHKSHEGGIVYDKMAEWAARLTTTNIAHVIFLTNDVAFSKSLSKALPDRVFRQISLSDCSPDVAKKFVVTHLDADVEDDPAPKDGSEKKLPSQHRTDLAELDSCIDLLGGRLTDLEFLARRIKTGETPNKAVNEIIDQSASEILKMYIFGAEDDGGRRKWSPEQAWMLIKELAQKESLRYNEVLLDDILKTGGESALRDLEQAELISIISGPNGRPSTIRPGKPVYHSAFKRLAQDKVLKSHLDYAILTNLTKIENATIDKCENELLLLSKLRNQPAQTAGRVQYLLAKLSASQVKVEKYETEIKGLKKVMAEED</sequence>